<dbReference type="EC" id="5.2.1.8"/>
<dbReference type="EMBL" id="U77365">
    <property type="protein sequence ID" value="AAC39444.1"/>
    <property type="molecule type" value="mRNA"/>
</dbReference>
<dbReference type="EMBL" id="U77366">
    <property type="protein sequence ID" value="AAC39445.1"/>
    <property type="molecule type" value="mRNA"/>
</dbReference>
<dbReference type="EMBL" id="AL132960">
    <property type="protein sequence ID" value="CAB88363.1"/>
    <property type="status" value="ALT_SEQ"/>
    <property type="molecule type" value="Genomic_DNA"/>
</dbReference>
<dbReference type="EMBL" id="CP002686">
    <property type="protein sequence ID" value="AEE79174.1"/>
    <property type="molecule type" value="Genomic_DNA"/>
</dbReference>
<dbReference type="EMBL" id="CP002686">
    <property type="protein sequence ID" value="AEE79175.1"/>
    <property type="molecule type" value="Genomic_DNA"/>
</dbReference>
<dbReference type="EMBL" id="AY056265">
    <property type="protein sequence ID" value="AAL07114.1"/>
    <property type="molecule type" value="mRNA"/>
</dbReference>
<dbReference type="EMBL" id="AY096635">
    <property type="protein sequence ID" value="AAM20285.1"/>
    <property type="molecule type" value="mRNA"/>
</dbReference>
<dbReference type="PIR" id="T45941">
    <property type="entry name" value="T45941"/>
</dbReference>
<dbReference type="RefSeq" id="NP_566993.1">
    <molecule id="Q7DMA9-1"/>
    <property type="nucleotide sequence ID" value="NM_115261.4"/>
</dbReference>
<dbReference type="RefSeq" id="NP_850701.1">
    <molecule id="Q7DMA9-2"/>
    <property type="nucleotide sequence ID" value="NM_180370.3"/>
</dbReference>
<dbReference type="SMR" id="Q7DMA9"/>
<dbReference type="BioGRID" id="9885">
    <property type="interactions" value="5"/>
</dbReference>
<dbReference type="FunCoup" id="Q7DMA9">
    <property type="interactions" value="1507"/>
</dbReference>
<dbReference type="IntAct" id="Q7DMA9">
    <property type="interactions" value="4"/>
</dbReference>
<dbReference type="STRING" id="3702.Q7DMA9"/>
<dbReference type="PaxDb" id="3702-AT3G54010.1"/>
<dbReference type="ProteomicsDB" id="226057">
    <molecule id="Q7DMA9-1"/>
</dbReference>
<dbReference type="EnsemblPlants" id="AT3G54010.1">
    <molecule id="Q7DMA9-1"/>
    <property type="protein sequence ID" value="AT3G54010.1"/>
    <property type="gene ID" value="AT3G54010"/>
</dbReference>
<dbReference type="EnsemblPlants" id="AT3G54010.2">
    <molecule id="Q7DMA9-2"/>
    <property type="protein sequence ID" value="AT3G54010.2"/>
    <property type="gene ID" value="AT3G54010"/>
</dbReference>
<dbReference type="GeneID" id="824568"/>
<dbReference type="Gramene" id="AT3G54010.1">
    <molecule id="Q7DMA9-1"/>
    <property type="protein sequence ID" value="AT3G54010.1"/>
    <property type="gene ID" value="AT3G54010"/>
</dbReference>
<dbReference type="Gramene" id="AT3G54010.2">
    <molecule id="Q7DMA9-2"/>
    <property type="protein sequence ID" value="AT3G54010.2"/>
    <property type="gene ID" value="AT3G54010"/>
</dbReference>
<dbReference type="KEGG" id="ath:AT3G54010"/>
<dbReference type="Araport" id="AT3G54010"/>
<dbReference type="TAIR" id="AT3G54010">
    <property type="gene designation" value="PAS1"/>
</dbReference>
<dbReference type="eggNOG" id="KOG0543">
    <property type="taxonomic scope" value="Eukaryota"/>
</dbReference>
<dbReference type="InParanoid" id="Q7DMA9"/>
<dbReference type="PhylomeDB" id="Q7DMA9"/>
<dbReference type="PRO" id="PR:Q7DMA9"/>
<dbReference type="Proteomes" id="UP000006548">
    <property type="component" value="Chromosome 3"/>
</dbReference>
<dbReference type="ExpressionAtlas" id="Q7DMA9">
    <property type="expression patterns" value="baseline and differential"/>
</dbReference>
<dbReference type="GO" id="GO:0005783">
    <property type="term" value="C:endoplasmic reticulum"/>
    <property type="evidence" value="ECO:0000314"/>
    <property type="project" value="TAIR"/>
</dbReference>
<dbReference type="GO" id="GO:0005789">
    <property type="term" value="C:endoplasmic reticulum membrane"/>
    <property type="evidence" value="ECO:0007669"/>
    <property type="project" value="UniProtKB-SubCell"/>
</dbReference>
<dbReference type="GO" id="GO:0005634">
    <property type="term" value="C:nucleus"/>
    <property type="evidence" value="ECO:0000250"/>
    <property type="project" value="TAIR"/>
</dbReference>
<dbReference type="GO" id="GO:0003755">
    <property type="term" value="F:peptidyl-prolyl cis-trans isomerase activity"/>
    <property type="evidence" value="ECO:0007669"/>
    <property type="project" value="UniProtKB-KW"/>
</dbReference>
<dbReference type="GO" id="GO:0009734">
    <property type="term" value="P:auxin-activated signaling pathway"/>
    <property type="evidence" value="ECO:0007669"/>
    <property type="project" value="UniProtKB-KW"/>
</dbReference>
<dbReference type="GO" id="GO:0030154">
    <property type="term" value="P:cell differentiation"/>
    <property type="evidence" value="ECO:0000315"/>
    <property type="project" value="TAIR"/>
</dbReference>
<dbReference type="GO" id="GO:0009736">
    <property type="term" value="P:cytokinin-activated signaling pathway"/>
    <property type="evidence" value="ECO:0007669"/>
    <property type="project" value="UniProtKB-KW"/>
</dbReference>
<dbReference type="GO" id="GO:0009793">
    <property type="term" value="P:embryo development ending in seed dormancy"/>
    <property type="evidence" value="ECO:0000315"/>
    <property type="project" value="TAIR"/>
</dbReference>
<dbReference type="GO" id="GO:0009880">
    <property type="term" value="P:embryonic pattern specification"/>
    <property type="evidence" value="ECO:0000315"/>
    <property type="project" value="TAIR"/>
</dbReference>
<dbReference type="GO" id="GO:0030010">
    <property type="term" value="P:establishment of cell polarity"/>
    <property type="evidence" value="ECO:0000315"/>
    <property type="project" value="TAIR"/>
</dbReference>
<dbReference type="GO" id="GO:0048527">
    <property type="term" value="P:lateral root development"/>
    <property type="evidence" value="ECO:0000315"/>
    <property type="project" value="TAIR"/>
</dbReference>
<dbReference type="GO" id="GO:0009735">
    <property type="term" value="P:response to cytokinin"/>
    <property type="evidence" value="ECO:0000315"/>
    <property type="project" value="TAIR"/>
</dbReference>
<dbReference type="GO" id="GO:0048364">
    <property type="term" value="P:root development"/>
    <property type="evidence" value="ECO:0000315"/>
    <property type="project" value="TAIR"/>
</dbReference>
<dbReference type="GO" id="GO:0009826">
    <property type="term" value="P:unidimensional cell growth"/>
    <property type="evidence" value="ECO:0000315"/>
    <property type="project" value="TAIR"/>
</dbReference>
<dbReference type="GO" id="GO:0042761">
    <property type="term" value="P:very long-chain fatty acid biosynthetic process"/>
    <property type="evidence" value="ECO:0000315"/>
    <property type="project" value="TAIR"/>
</dbReference>
<dbReference type="FunFam" id="1.25.40.10:FF:000008">
    <property type="entry name" value="Peptidylprolyl isomerase"/>
    <property type="match status" value="1"/>
</dbReference>
<dbReference type="FunFam" id="3.10.50.40:FF:000029">
    <property type="entry name" value="Peptidylprolyl isomerase"/>
    <property type="match status" value="1"/>
</dbReference>
<dbReference type="FunFam" id="3.10.50.40:FF:000039">
    <property type="entry name" value="Peptidylprolyl isomerase"/>
    <property type="match status" value="1"/>
</dbReference>
<dbReference type="FunFam" id="3.10.50.40:FF:000052">
    <property type="entry name" value="Peptidylprolyl isomerase"/>
    <property type="match status" value="1"/>
</dbReference>
<dbReference type="Gene3D" id="3.10.50.40">
    <property type="match status" value="3"/>
</dbReference>
<dbReference type="Gene3D" id="1.25.40.10">
    <property type="entry name" value="Tetratricopeptide repeat domain"/>
    <property type="match status" value="1"/>
</dbReference>
<dbReference type="InterPro" id="IPR050754">
    <property type="entry name" value="FKBP4/5/8-like"/>
</dbReference>
<dbReference type="InterPro" id="IPR046357">
    <property type="entry name" value="PPIase_dom_sf"/>
</dbReference>
<dbReference type="InterPro" id="IPR001179">
    <property type="entry name" value="PPIase_FKBP_dom"/>
</dbReference>
<dbReference type="InterPro" id="IPR011990">
    <property type="entry name" value="TPR-like_helical_dom_sf"/>
</dbReference>
<dbReference type="InterPro" id="IPR019734">
    <property type="entry name" value="TPR_rpt"/>
</dbReference>
<dbReference type="PANTHER" id="PTHR46512">
    <property type="entry name" value="PEPTIDYLPROLYL ISOMERASE"/>
    <property type="match status" value="1"/>
</dbReference>
<dbReference type="PANTHER" id="PTHR46512:SF9">
    <property type="entry name" value="PEPTIDYLPROLYL ISOMERASE"/>
    <property type="match status" value="1"/>
</dbReference>
<dbReference type="Pfam" id="PF00254">
    <property type="entry name" value="FKBP_C"/>
    <property type="match status" value="3"/>
</dbReference>
<dbReference type="Pfam" id="PF13174">
    <property type="entry name" value="TPR_6"/>
    <property type="match status" value="1"/>
</dbReference>
<dbReference type="SMART" id="SM00028">
    <property type="entry name" value="TPR"/>
    <property type="match status" value="3"/>
</dbReference>
<dbReference type="SUPFAM" id="SSF54534">
    <property type="entry name" value="FKBP-like"/>
    <property type="match status" value="3"/>
</dbReference>
<dbReference type="SUPFAM" id="SSF48452">
    <property type="entry name" value="TPR-like"/>
    <property type="match status" value="1"/>
</dbReference>
<dbReference type="PROSITE" id="PS50059">
    <property type="entry name" value="FKBP_PPIASE"/>
    <property type="match status" value="2"/>
</dbReference>
<dbReference type="PROSITE" id="PS50005">
    <property type="entry name" value="TPR"/>
    <property type="match status" value="3"/>
</dbReference>
<dbReference type="PROSITE" id="PS50293">
    <property type="entry name" value="TPR_REGION"/>
    <property type="match status" value="1"/>
</dbReference>
<organism>
    <name type="scientific">Arabidopsis thaliana</name>
    <name type="common">Mouse-ear cress</name>
    <dbReference type="NCBI Taxonomy" id="3702"/>
    <lineage>
        <taxon>Eukaryota</taxon>
        <taxon>Viridiplantae</taxon>
        <taxon>Streptophyta</taxon>
        <taxon>Embryophyta</taxon>
        <taxon>Tracheophyta</taxon>
        <taxon>Spermatophyta</taxon>
        <taxon>Magnoliopsida</taxon>
        <taxon>eudicotyledons</taxon>
        <taxon>Gunneridae</taxon>
        <taxon>Pentapetalae</taxon>
        <taxon>rosids</taxon>
        <taxon>malvids</taxon>
        <taxon>Brassicales</taxon>
        <taxon>Brassicaceae</taxon>
        <taxon>Camelineae</taxon>
        <taxon>Arabidopsis</taxon>
    </lineage>
</organism>
<sequence>MAVGDQTEQNYLPKKKKSETEDDKRRKKIVPGSLLKAVVRPGGGDSSPVDGDQVIYHCTVRTLDGVVVESTRSESGGRGVPIRDVLGNSKMILGLLEGIPTMHKGEIAMFKMKPEMHYAEIDCPVSAPENFPKDDELHFEIELLDFSKAKIASDDLGVIKKILNEGEGWESPREPYEVKARISAKSGDGHVIFSHTEEPYFFTFGKSEVPKGLEIGIGTMARKEKAVIYVRKQYLTESPLLHIDQDLEEVHFEVELVHFIQVRDMLGDGRLIKRRIRDGRGEFPMDCPLQDSRLSVHYKGMLLNEEKTVFYDSKIDNNDQPLEFSSGEGLVPEGFEMCTRLMLPGEIALVTCPPDYAYDKFPRPPGVSEGAHVQWEIELLGFETPRDWTGLNFQSIMDEADKIRSTGNRLFKEGKFELAKAKYEKVLREFNHVNPQDEDEGKIFGDTRNMLHLNVAACLLKMGEWRKSIETCNKVLEAKPGHVKGLYRRGMAYIAGGEYDDARNDFNMMIKVDKSSEADATAALLKLKQKEQEAESKARKQFKGLFDKRPGEITEVGSEIREESKTIEEVDETKDNDDDETLEEEGATTVSTERKRKWSEKAWPFLKNVMLQIGIQLGVVLIGILIFQFVSAKFT</sequence>
<protein>
    <recommendedName>
        <fullName>Peptidyl-prolyl cis-trans isomerase PASTICCINO1</fullName>
        <ecNumber>5.2.1.8</ecNumber>
    </recommendedName>
    <alternativeName>
        <fullName>70 kDa peptidyl-prolyl isomerase</fullName>
    </alternativeName>
    <alternativeName>
        <fullName>FK506-binding protein 72</fullName>
        <shortName>AtFKBP72</shortName>
    </alternativeName>
    <alternativeName>
        <fullName>Immunophilin FKBP72</fullName>
    </alternativeName>
    <alternativeName>
        <fullName>Peptidyl-prolyl cis-trans isomerase FKBP72</fullName>
        <shortName>PPIase FKBP72</shortName>
    </alternativeName>
    <alternativeName>
        <fullName>Rotamase</fullName>
    </alternativeName>
</protein>
<comment type="function">
    <text evidence="1 5 7 8 9 10 11">PPIases accelerate the folding of proteins. It catalyzes the cis-trans isomerization of proline imidic peptide bonds in oligopeptides (By similarity). Essential protein regulating cell division, adhesion and elongation throughout the plant development and embryogenesis. Required for the spatial organization of apical meristems. Involved in the hormonal control of cell division and differentiation mediated by cytokinins and auxin. Regulates the function of NAC089 transcription factor by controlling its targeting to the nucleus upon plant cell division. Interacts with enzymes of the fatty acid elongase complex and favors the generation of very-long-chain fatty acids (VLCFAs) required for polar auxin transport and tissue patterning during plant development.</text>
</comment>
<comment type="catalytic activity">
    <reaction>
        <text>[protein]-peptidylproline (omega=180) = [protein]-peptidylproline (omega=0)</text>
        <dbReference type="Rhea" id="RHEA:16237"/>
        <dbReference type="Rhea" id="RHEA-COMP:10747"/>
        <dbReference type="Rhea" id="RHEA-COMP:10748"/>
        <dbReference type="ChEBI" id="CHEBI:83833"/>
        <dbReference type="ChEBI" id="CHEBI:83834"/>
        <dbReference type="EC" id="5.2.1.8"/>
    </reaction>
</comment>
<comment type="subunit">
    <text evidence="6 7 8 11">Interacts with calmodulin (CaM). Interacts with RPM1 and NAC089. Interacts with the elongase complex core members KCR1, PAS2 and CER10.</text>
</comment>
<comment type="interaction">
    <interactant intactId="EBI-637668">
        <id>Q7DMA9</id>
    </interactant>
    <interactant intactId="EBI-2319707">
        <id>Q94F58</id>
        <label>NAC089</label>
    </interactant>
    <organismsDiffer>false</organismsDiffer>
    <experiments>6</experiments>
</comment>
<comment type="subcellular location">
    <subcellularLocation>
        <location evidence="13">Endoplasmic reticulum membrane</location>
        <topology evidence="13">Single-pass type IV membrane protein</topology>
    </subcellularLocation>
    <subcellularLocation>
        <location evidence="13">Cytoplasm</location>
    </subcellularLocation>
    <subcellularLocation>
        <location evidence="7 11">Nucleus</location>
    </subcellularLocation>
    <text>Relocalization from the cytoplasm into the nucleus is induced by auxin treatment and in association with NAC089.</text>
</comment>
<comment type="alternative products">
    <event type="alternative splicing"/>
    <isoform>
        <id>Q7DMA9-1</id>
        <name>1</name>
        <name>PAS1-D</name>
        <sequence type="displayed"/>
    </isoform>
    <isoform>
        <id>Q7DMA9-2</id>
        <name>2</name>
        <name>PAS1-A</name>
        <sequence type="described" ref="VSP_015492"/>
    </isoform>
</comment>
<comment type="tissue specificity">
    <text evidence="10">Expressed ubiquitously.</text>
</comment>
<comment type="induction">
    <text evidence="10">By cytokinins, and to a lower extent by auxin.</text>
</comment>
<comment type="disruption phenotype">
    <text evidence="5 7 8">Plants fail to develop apical hook in the dark and exhibit abnormal embryogenesis from the heart stage. Deficiency in lateral root formation and abnormal patterning of the embryo apex, which leads to defective cotyledon organogenesis like small and thick hypocotyl, finger-shaped cotyledons and small fused leaves. Ectopic cell proliferation in the presence of cytokinins.</text>
</comment>
<comment type="miscellaneous">
    <text>'Pasticcino' means 'small cake' in Italian.</text>
</comment>
<comment type="miscellaneous">
    <molecule>Isoform 2</molecule>
    <text evidence="13">May be due to an intron retention.</text>
</comment>
<comment type="similarity">
    <text evidence="13">Belongs to the FKBP-type PPIase family.</text>
</comment>
<comment type="sequence caution" evidence="13">
    <conflict type="erroneous gene model prediction">
        <sequence resource="EMBL-CDS" id="CAB88363"/>
    </conflict>
</comment>
<feature type="chain" id="PRO_0000075336" description="Peptidyl-prolyl cis-trans isomerase PASTICCINO1">
    <location>
        <begin position="1"/>
        <end position="635"/>
    </location>
</feature>
<feature type="transmembrane region" description="Helical; Anchor for type IV membrane protein" evidence="2">
    <location>
        <begin position="609"/>
        <end position="629"/>
    </location>
</feature>
<feature type="domain" description="PPIase FKBP-type 1" evidence="3">
    <location>
        <begin position="51"/>
        <end position="147"/>
    </location>
</feature>
<feature type="domain" description="PPIase FKBP-type 2" evidence="3">
    <location>
        <begin position="175"/>
        <end position="260"/>
    </location>
</feature>
<feature type="domain" description="PPIase FKBP-type 3" evidence="3">
    <location>
        <begin position="291"/>
        <end position="383"/>
    </location>
</feature>
<feature type="repeat" description="TPR 1">
    <location>
        <begin position="400"/>
        <end position="433"/>
    </location>
</feature>
<feature type="repeat" description="TPR 2">
    <location>
        <begin position="449"/>
        <end position="482"/>
    </location>
</feature>
<feature type="repeat" description="TPR 3">
    <location>
        <begin position="483"/>
        <end position="516"/>
    </location>
</feature>
<feature type="region of interest" description="Disordered" evidence="4">
    <location>
        <begin position="1"/>
        <end position="28"/>
    </location>
</feature>
<feature type="region of interest" description="Calmodulin-binding" evidence="2">
    <location>
        <begin position="530"/>
        <end position="546"/>
    </location>
</feature>
<feature type="region of interest" description="Disordered" evidence="4">
    <location>
        <begin position="569"/>
        <end position="593"/>
    </location>
</feature>
<feature type="compositionally biased region" description="Polar residues" evidence="4">
    <location>
        <begin position="1"/>
        <end position="10"/>
    </location>
</feature>
<feature type="compositionally biased region" description="Acidic residues" evidence="4">
    <location>
        <begin position="569"/>
        <end position="586"/>
    </location>
</feature>
<feature type="splice variant" id="VSP_015492" description="In isoform 2." evidence="12">
    <location>
        <begin position="1"/>
        <end position="90"/>
    </location>
</feature>
<feature type="sequence conflict" description="In Ref. 1; AAC39445." evidence="13" ref="1">
    <original>N</original>
    <variation>K</variation>
    <location>
        <position position="88"/>
    </location>
</feature>
<feature type="sequence conflict" description="In Ref. 1; AAC39444/AAC39445." evidence="13" ref="1">
    <location>
        <position position="583"/>
    </location>
</feature>
<gene>
    <name type="primary">PAS1</name>
    <name type="synonym">DEI1</name>
    <name type="synonym">FKBP70</name>
    <name type="synonym">FKBP72</name>
    <name type="ordered locus">At3g54010</name>
    <name type="ORF">F5K20.310</name>
</gene>
<reference key="1">
    <citation type="journal article" date="1998" name="Mol. Cell. Biol.">
        <title>Mutation in the Arabidopsis PASTICCINO1 gene, which encodes a new FK506-binding protein-like protein, has a dramatic effect on plant development.</title>
        <authorList>
            <person name="Vittorioso P."/>
            <person name="Cowling R."/>
            <person name="Faure J.-D."/>
            <person name="Caboche M."/>
            <person name="Bellini C."/>
        </authorList>
    </citation>
    <scope>NUCLEOTIDE SEQUENCE [MRNA] (ISOFORMS 1 AND 2)</scope>
    <scope>FUNCTION</scope>
    <scope>TISSUE SPECIFICITY</scope>
    <scope>INDUCTION</scope>
</reference>
<reference key="2">
    <citation type="journal article" date="2000" name="Nature">
        <title>Sequence and analysis of chromosome 3 of the plant Arabidopsis thaliana.</title>
        <authorList>
            <person name="Salanoubat M."/>
            <person name="Lemcke K."/>
            <person name="Rieger M."/>
            <person name="Ansorge W."/>
            <person name="Unseld M."/>
            <person name="Fartmann B."/>
            <person name="Valle G."/>
            <person name="Bloecker H."/>
            <person name="Perez-Alonso M."/>
            <person name="Obermaier B."/>
            <person name="Delseny M."/>
            <person name="Boutry M."/>
            <person name="Grivell L.A."/>
            <person name="Mache R."/>
            <person name="Puigdomenech P."/>
            <person name="De Simone V."/>
            <person name="Choisne N."/>
            <person name="Artiguenave F."/>
            <person name="Robert C."/>
            <person name="Brottier P."/>
            <person name="Wincker P."/>
            <person name="Cattolico L."/>
            <person name="Weissenbach J."/>
            <person name="Saurin W."/>
            <person name="Quetier F."/>
            <person name="Schaefer M."/>
            <person name="Mueller-Auer S."/>
            <person name="Gabel C."/>
            <person name="Fuchs M."/>
            <person name="Benes V."/>
            <person name="Wurmbach E."/>
            <person name="Drzonek H."/>
            <person name="Erfle H."/>
            <person name="Jordan N."/>
            <person name="Bangert S."/>
            <person name="Wiedelmann R."/>
            <person name="Kranz H."/>
            <person name="Voss H."/>
            <person name="Holland R."/>
            <person name="Brandt P."/>
            <person name="Nyakatura G."/>
            <person name="Vezzi A."/>
            <person name="D'Angelo M."/>
            <person name="Pallavicini A."/>
            <person name="Toppo S."/>
            <person name="Simionati B."/>
            <person name="Conrad A."/>
            <person name="Hornischer K."/>
            <person name="Kauer G."/>
            <person name="Loehnert T.-H."/>
            <person name="Nordsiek G."/>
            <person name="Reichelt J."/>
            <person name="Scharfe M."/>
            <person name="Schoen O."/>
            <person name="Bargues M."/>
            <person name="Terol J."/>
            <person name="Climent J."/>
            <person name="Navarro P."/>
            <person name="Collado C."/>
            <person name="Perez-Perez A."/>
            <person name="Ottenwaelder B."/>
            <person name="Duchemin D."/>
            <person name="Cooke R."/>
            <person name="Laudie M."/>
            <person name="Berger-Llauro C."/>
            <person name="Purnelle B."/>
            <person name="Masuy D."/>
            <person name="de Haan M."/>
            <person name="Maarse A.C."/>
            <person name="Alcaraz J.-P."/>
            <person name="Cottet A."/>
            <person name="Casacuberta E."/>
            <person name="Monfort A."/>
            <person name="Argiriou A."/>
            <person name="Flores M."/>
            <person name="Liguori R."/>
            <person name="Vitale D."/>
            <person name="Mannhaupt G."/>
            <person name="Haase D."/>
            <person name="Schoof H."/>
            <person name="Rudd S."/>
            <person name="Zaccaria P."/>
            <person name="Mewes H.-W."/>
            <person name="Mayer K.F.X."/>
            <person name="Kaul S."/>
            <person name="Town C.D."/>
            <person name="Koo H.L."/>
            <person name="Tallon L.J."/>
            <person name="Jenkins J."/>
            <person name="Rooney T."/>
            <person name="Rizzo M."/>
            <person name="Walts A."/>
            <person name="Utterback T."/>
            <person name="Fujii C.Y."/>
            <person name="Shea T.P."/>
            <person name="Creasy T.H."/>
            <person name="Haas B."/>
            <person name="Maiti R."/>
            <person name="Wu D."/>
            <person name="Peterson J."/>
            <person name="Van Aken S."/>
            <person name="Pai G."/>
            <person name="Militscher J."/>
            <person name="Sellers P."/>
            <person name="Gill J.E."/>
            <person name="Feldblyum T.V."/>
            <person name="Preuss D."/>
            <person name="Lin X."/>
            <person name="Nierman W.C."/>
            <person name="Salzberg S.L."/>
            <person name="White O."/>
            <person name="Venter J.C."/>
            <person name="Fraser C.M."/>
            <person name="Kaneko T."/>
            <person name="Nakamura Y."/>
            <person name="Sato S."/>
            <person name="Kato T."/>
            <person name="Asamizu E."/>
            <person name="Sasamoto S."/>
            <person name="Kimura T."/>
            <person name="Idesawa K."/>
            <person name="Kawashima K."/>
            <person name="Kishida Y."/>
            <person name="Kiyokawa C."/>
            <person name="Kohara M."/>
            <person name="Matsumoto M."/>
            <person name="Matsuno A."/>
            <person name="Muraki A."/>
            <person name="Nakayama S."/>
            <person name="Nakazaki N."/>
            <person name="Shinpo S."/>
            <person name="Takeuchi C."/>
            <person name="Wada T."/>
            <person name="Watanabe A."/>
            <person name="Yamada M."/>
            <person name="Yasuda M."/>
            <person name="Tabata S."/>
        </authorList>
    </citation>
    <scope>NUCLEOTIDE SEQUENCE [LARGE SCALE GENOMIC DNA]</scope>
    <source>
        <strain>cv. Columbia</strain>
    </source>
</reference>
<reference key="3">
    <citation type="journal article" date="2017" name="Plant J.">
        <title>Araport11: a complete reannotation of the Arabidopsis thaliana reference genome.</title>
        <authorList>
            <person name="Cheng C.Y."/>
            <person name="Krishnakumar V."/>
            <person name="Chan A.P."/>
            <person name="Thibaud-Nissen F."/>
            <person name="Schobel S."/>
            <person name="Town C.D."/>
        </authorList>
    </citation>
    <scope>GENOME REANNOTATION</scope>
    <source>
        <strain>cv. Columbia</strain>
    </source>
</reference>
<reference key="4">
    <citation type="journal article" date="2003" name="Science">
        <title>Empirical analysis of transcriptional activity in the Arabidopsis genome.</title>
        <authorList>
            <person name="Yamada K."/>
            <person name="Lim J."/>
            <person name="Dale J.M."/>
            <person name="Chen H."/>
            <person name="Shinn P."/>
            <person name="Palm C.J."/>
            <person name="Southwick A.M."/>
            <person name="Wu H.C."/>
            <person name="Kim C.J."/>
            <person name="Nguyen M."/>
            <person name="Pham P.K."/>
            <person name="Cheuk R.F."/>
            <person name="Karlin-Newmann G."/>
            <person name="Liu S.X."/>
            <person name="Lam B."/>
            <person name="Sakano H."/>
            <person name="Wu T."/>
            <person name="Yu G."/>
            <person name="Miranda M."/>
            <person name="Quach H.L."/>
            <person name="Tripp M."/>
            <person name="Chang C.H."/>
            <person name="Lee J.M."/>
            <person name="Toriumi M.J."/>
            <person name="Chan M.M."/>
            <person name="Tang C.C."/>
            <person name="Onodera C.S."/>
            <person name="Deng J.M."/>
            <person name="Akiyama K."/>
            <person name="Ansari Y."/>
            <person name="Arakawa T."/>
            <person name="Banh J."/>
            <person name="Banno F."/>
            <person name="Bowser L."/>
            <person name="Brooks S.Y."/>
            <person name="Carninci P."/>
            <person name="Chao Q."/>
            <person name="Choy N."/>
            <person name="Enju A."/>
            <person name="Goldsmith A.D."/>
            <person name="Gurjal M."/>
            <person name="Hansen N.F."/>
            <person name="Hayashizaki Y."/>
            <person name="Johnson-Hopson C."/>
            <person name="Hsuan V.W."/>
            <person name="Iida K."/>
            <person name="Karnes M."/>
            <person name="Khan S."/>
            <person name="Koesema E."/>
            <person name="Ishida J."/>
            <person name="Jiang P.X."/>
            <person name="Jones T."/>
            <person name="Kawai J."/>
            <person name="Kamiya A."/>
            <person name="Meyers C."/>
            <person name="Nakajima M."/>
            <person name="Narusaka M."/>
            <person name="Seki M."/>
            <person name="Sakurai T."/>
            <person name="Satou M."/>
            <person name="Tamse R."/>
            <person name="Vaysberg M."/>
            <person name="Wallender E.K."/>
            <person name="Wong C."/>
            <person name="Yamamura Y."/>
            <person name="Yuan S."/>
            <person name="Shinozaki K."/>
            <person name="Davis R.W."/>
            <person name="Theologis A."/>
            <person name="Ecker J.R."/>
        </authorList>
    </citation>
    <scope>NUCLEOTIDE SEQUENCE [LARGE SCALE MRNA] (ISOFORM 1)</scope>
    <source>
        <strain>cv. Columbia</strain>
    </source>
</reference>
<reference key="5">
    <citation type="journal article" date="1998" name="Development">
        <title>The PASTICCINO genes of Arabidopsis thaliana are involved in the control of cell division and differentiation.</title>
        <authorList>
            <person name="Faure J.-D."/>
            <person name="Vittorioso P."/>
            <person name="Santoni V."/>
            <person name="Fraisier V."/>
            <person name="Prinsen E."/>
            <person name="Barlier I."/>
            <person name="Van Onckelen H."/>
            <person name="Caboche M."/>
            <person name="Bellini C."/>
        </authorList>
    </citation>
    <scope>FUNCTION</scope>
</reference>
<reference key="6">
    <citation type="journal article" date="2001" name="Plant Sci.">
        <title>PASTICCINO1 (AtFKBP70) is a nuclear-localised immunophilin required during Arabidopsis thaliana embryogenesis.</title>
        <authorList>
            <person name="Carol R.J."/>
            <person name="Breiman A."/>
            <person name="Erel N."/>
            <person name="Vittorioso P."/>
            <person name="Bellini C."/>
        </authorList>
    </citation>
    <scope>FUNCTION</scope>
    <scope>SUBCELLULAR LOCATION</scope>
    <scope>INTERACTION WITH CALMODULIN</scope>
</reference>
<reference key="7">
    <citation type="journal article" date="2003" name="Plant Physiol.">
        <title>Hormonal control of cell proliferation requires PASTICCINO genes.</title>
        <authorList>
            <person name="Harrar Y."/>
            <person name="Bellec Y."/>
            <person name="Bellini C."/>
            <person name="Faure J.-D."/>
        </authorList>
    </citation>
    <scope>FUNCTION</scope>
    <scope>DISRUPTION PHENOTYPE</scope>
</reference>
<reference key="8">
    <citation type="journal article" date="2004" name="Mol. Biol. Cell">
        <title>Arabidopsis immunophilin-like TWD1 functionally interacts with vacuolar ABC transporters.</title>
        <authorList>
            <person name="Geisler M."/>
            <person name="Girin M."/>
            <person name="Brandt S."/>
            <person name="Vincenzetti V."/>
            <person name="Plaza S."/>
            <person name="Paris N."/>
            <person name="Kobae Y."/>
            <person name="Maeshima M."/>
            <person name="Billion K."/>
            <person name="Kolukisaoglu U.H."/>
            <person name="Schulz B."/>
            <person name="Martinoia E."/>
        </authorList>
    </citation>
    <scope>INTERACTION WITH RPM1</scope>
</reference>
<reference key="9">
    <citation type="journal article" date="2004" name="Plant Physiol.">
        <title>Immunophilins and parvulins. Superfamily of peptidyl prolyl isomerases in Arabidopsis.</title>
        <authorList>
            <person name="He Z."/>
            <person name="Li L."/>
            <person name="Luan S."/>
        </authorList>
    </citation>
    <scope>GENE FAMILY</scope>
    <scope>NOMENCLATURE</scope>
</reference>
<reference key="10">
    <citation type="journal article" date="2006" name="J. Biol. Chem.">
        <title>The C terminus of the immunophilin PASTICCINO1 is required for plant development and for interaction with a NAC-like transcription factor.</title>
        <authorList>
            <person name="Smyczynski C."/>
            <person name="Roudier F."/>
            <person name="Gissot L."/>
            <person name="Vaillant E."/>
            <person name="Grandjean O."/>
            <person name="Morin H."/>
            <person name="Masson T."/>
            <person name="Bellec Y."/>
            <person name="Geelen D."/>
            <person name="Faure J.D."/>
        </authorList>
    </citation>
    <scope>FUNCTION</scope>
    <scope>DISRUPTION PHENOTYPE</scope>
    <scope>INTERACTION WITH NAC089</scope>
    <scope>SUBCELLULAR LOCATION</scope>
</reference>
<reference key="11">
    <citation type="journal article" date="2010" name="Plant Cell">
        <title>Very-long-chain fatty acids are involved in polar auxin transport and developmental patterning in Arabidopsis.</title>
        <authorList>
            <person name="Roudier F."/>
            <person name="Gissot L."/>
            <person name="Beaudoin F."/>
            <person name="Haslam R."/>
            <person name="Michaelson L."/>
            <person name="Marion J."/>
            <person name="Molino D."/>
            <person name="Lima A."/>
            <person name="Bach L."/>
            <person name="Morin H."/>
            <person name="Tellier F."/>
            <person name="Palauqui J.C."/>
            <person name="Bellec Y."/>
            <person name="Renne C."/>
            <person name="Miquel M."/>
            <person name="Dacosta M."/>
            <person name="Vignard J."/>
            <person name="Rochat C."/>
            <person name="Markham J.E."/>
            <person name="Moreau P."/>
            <person name="Napier J."/>
            <person name="Faure J.D."/>
        </authorList>
    </citation>
    <scope>FUNCTION</scope>
    <scope>DISRUPTION PHENOTYPE</scope>
    <scope>INTERACTION WITH THE ELONGASE COMPLEX</scope>
</reference>
<proteinExistence type="evidence at protein level"/>
<keyword id="KW-0025">Alternative splicing</keyword>
<keyword id="KW-0927">Auxin signaling pathway</keyword>
<keyword id="KW-0932">Cytokinin signaling pathway</keyword>
<keyword id="KW-0963">Cytoplasm</keyword>
<keyword id="KW-0256">Endoplasmic reticulum</keyword>
<keyword id="KW-0413">Isomerase</keyword>
<keyword id="KW-0472">Membrane</keyword>
<keyword id="KW-0539">Nucleus</keyword>
<keyword id="KW-1185">Reference proteome</keyword>
<keyword id="KW-0677">Repeat</keyword>
<keyword id="KW-0697">Rotamase</keyword>
<keyword id="KW-0802">TPR repeat</keyword>
<keyword id="KW-0812">Transmembrane</keyword>
<keyword id="KW-1133">Transmembrane helix</keyword>
<accession>Q7DMA9</accession>
<accession>O64403</accession>
<accession>Q93ZT7</accession>
<accession>Q9M326</accession>
<name>PAS1_ARATH</name>
<evidence type="ECO:0000250" key="1"/>
<evidence type="ECO:0000255" key="2"/>
<evidence type="ECO:0000255" key="3">
    <source>
        <dbReference type="PROSITE-ProRule" id="PRU00277"/>
    </source>
</evidence>
<evidence type="ECO:0000256" key="4">
    <source>
        <dbReference type="SAM" id="MobiDB-lite"/>
    </source>
</evidence>
<evidence type="ECO:0000269" key="5">
    <source>
    </source>
</evidence>
<evidence type="ECO:0000269" key="6">
    <source>
    </source>
</evidence>
<evidence type="ECO:0000269" key="7">
    <source>
    </source>
</evidence>
<evidence type="ECO:0000269" key="8">
    <source>
    </source>
</evidence>
<evidence type="ECO:0000269" key="9">
    <source>
    </source>
</evidence>
<evidence type="ECO:0000269" key="10">
    <source>
    </source>
</evidence>
<evidence type="ECO:0000269" key="11">
    <source ref="6"/>
</evidence>
<evidence type="ECO:0000303" key="12">
    <source>
    </source>
</evidence>
<evidence type="ECO:0000305" key="13"/>